<reference key="1">
    <citation type="journal article" date="2009" name="Proc. Natl. Acad. Sci. U.S.A.">
        <title>Biogeography of the Sulfolobus islandicus pan-genome.</title>
        <authorList>
            <person name="Reno M.L."/>
            <person name="Held N.L."/>
            <person name="Fields C.J."/>
            <person name="Burke P.V."/>
            <person name="Whitaker R.J."/>
        </authorList>
    </citation>
    <scope>NUCLEOTIDE SEQUENCE [LARGE SCALE GENOMIC DNA]</scope>
    <source>
        <strain>M.16.4 / Kamchatka #3</strain>
    </source>
</reference>
<feature type="chain" id="PRO_1000205742" description="Homoserine kinase">
    <location>
        <begin position="1"/>
        <end position="311"/>
    </location>
</feature>
<feature type="binding site" evidence="1">
    <location>
        <begin position="88"/>
        <end position="98"/>
    </location>
    <ligand>
        <name>ATP</name>
        <dbReference type="ChEBI" id="CHEBI:30616"/>
    </ligand>
</feature>
<gene>
    <name evidence="1" type="primary">thrB</name>
    <name type="ordered locus">M164_0183</name>
</gene>
<name>KHSE_SACI6</name>
<protein>
    <recommendedName>
        <fullName evidence="1">Homoserine kinase</fullName>
        <shortName evidence="1">HK</shortName>
        <shortName evidence="1">HSK</shortName>
        <ecNumber evidence="1">2.7.1.39</ecNumber>
    </recommendedName>
</protein>
<accession>C4KK76</accession>
<sequence length="311" mass="33887">MECKRARAYSSSANLGSGFDILSMAHTAFFDTVEICVETKNSENIVIESNSKIPLEPNRNSATYPLVRIMEERGIKASLRVKVIKGIPEGLGLGSSGASATAAVMAFSSLFNLNLSKEDLVRYAMYGEIASSGSPHPDNVAASVFGGVVSVVSVNPVKVVEIPLNYSFNILLFVPLNVHIEEKTKKAREMVPKTVKLSDYINNSRYISSLLIGFVKGERDLIRLGLNDEIVEKARLPLFPYYPKIKEIAIKYDAVGSCVSGAGPSILVLTDKMTDENKIAEEGTKTCNEFNVECEVIKAKIAGGVEVERRN</sequence>
<proteinExistence type="inferred from homology"/>
<organism>
    <name type="scientific">Saccharolobus islandicus (strain M.16.4 / Kamchatka #3)</name>
    <name type="common">Sulfolobus islandicus</name>
    <dbReference type="NCBI Taxonomy" id="426118"/>
    <lineage>
        <taxon>Archaea</taxon>
        <taxon>Thermoproteota</taxon>
        <taxon>Thermoprotei</taxon>
        <taxon>Sulfolobales</taxon>
        <taxon>Sulfolobaceae</taxon>
        <taxon>Saccharolobus</taxon>
    </lineage>
</organism>
<comment type="function">
    <text evidence="1">Catalyzes the ATP-dependent phosphorylation of L-homoserine to L-homoserine phosphate.</text>
</comment>
<comment type="catalytic activity">
    <reaction evidence="1">
        <text>L-homoserine + ATP = O-phospho-L-homoserine + ADP + H(+)</text>
        <dbReference type="Rhea" id="RHEA:13985"/>
        <dbReference type="ChEBI" id="CHEBI:15378"/>
        <dbReference type="ChEBI" id="CHEBI:30616"/>
        <dbReference type="ChEBI" id="CHEBI:57476"/>
        <dbReference type="ChEBI" id="CHEBI:57590"/>
        <dbReference type="ChEBI" id="CHEBI:456216"/>
        <dbReference type="EC" id="2.7.1.39"/>
    </reaction>
</comment>
<comment type="pathway">
    <text evidence="1">Amino-acid biosynthesis; L-threonine biosynthesis; L-threonine from L-aspartate: step 4/5.</text>
</comment>
<comment type="subcellular location">
    <subcellularLocation>
        <location evidence="1">Cytoplasm</location>
    </subcellularLocation>
</comment>
<comment type="similarity">
    <text evidence="1">Belongs to the GHMP kinase family. Homoserine kinase subfamily.</text>
</comment>
<keyword id="KW-0028">Amino-acid biosynthesis</keyword>
<keyword id="KW-0067">ATP-binding</keyword>
<keyword id="KW-0963">Cytoplasm</keyword>
<keyword id="KW-0418">Kinase</keyword>
<keyword id="KW-0547">Nucleotide-binding</keyword>
<keyword id="KW-0791">Threonine biosynthesis</keyword>
<keyword id="KW-0808">Transferase</keyword>
<evidence type="ECO:0000255" key="1">
    <source>
        <dbReference type="HAMAP-Rule" id="MF_00384"/>
    </source>
</evidence>
<dbReference type="EC" id="2.7.1.39" evidence="1"/>
<dbReference type="EMBL" id="CP001402">
    <property type="protein sequence ID" value="ACR40817.1"/>
    <property type="molecule type" value="Genomic_DNA"/>
</dbReference>
<dbReference type="RefSeq" id="WP_012710342.1">
    <property type="nucleotide sequence ID" value="NC_012726.1"/>
</dbReference>
<dbReference type="SMR" id="C4KK76"/>
<dbReference type="KEGG" id="sid:M164_0183"/>
<dbReference type="HOGENOM" id="CLU_041243_1_1_2"/>
<dbReference type="UniPathway" id="UPA00050">
    <property type="reaction ID" value="UER00064"/>
</dbReference>
<dbReference type="Proteomes" id="UP000001479">
    <property type="component" value="Chromosome"/>
</dbReference>
<dbReference type="GO" id="GO:0005737">
    <property type="term" value="C:cytoplasm"/>
    <property type="evidence" value="ECO:0007669"/>
    <property type="project" value="UniProtKB-SubCell"/>
</dbReference>
<dbReference type="GO" id="GO:0005524">
    <property type="term" value="F:ATP binding"/>
    <property type="evidence" value="ECO:0007669"/>
    <property type="project" value="UniProtKB-UniRule"/>
</dbReference>
<dbReference type="GO" id="GO:0004413">
    <property type="term" value="F:homoserine kinase activity"/>
    <property type="evidence" value="ECO:0007669"/>
    <property type="project" value="UniProtKB-UniRule"/>
</dbReference>
<dbReference type="GO" id="GO:0009088">
    <property type="term" value="P:threonine biosynthetic process"/>
    <property type="evidence" value="ECO:0007669"/>
    <property type="project" value="UniProtKB-UniRule"/>
</dbReference>
<dbReference type="Gene3D" id="3.30.230.10">
    <property type="match status" value="1"/>
</dbReference>
<dbReference type="Gene3D" id="3.30.70.890">
    <property type="entry name" value="GHMP kinase, C-terminal domain"/>
    <property type="match status" value="1"/>
</dbReference>
<dbReference type="HAMAP" id="MF_00384">
    <property type="entry name" value="Homoser_kinase"/>
    <property type="match status" value="1"/>
</dbReference>
<dbReference type="InterPro" id="IPR013750">
    <property type="entry name" value="GHMP_kinase_C_dom"/>
</dbReference>
<dbReference type="InterPro" id="IPR036554">
    <property type="entry name" value="GHMP_kinase_C_sf"/>
</dbReference>
<dbReference type="InterPro" id="IPR006204">
    <property type="entry name" value="GHMP_kinase_N_dom"/>
</dbReference>
<dbReference type="InterPro" id="IPR006203">
    <property type="entry name" value="GHMP_knse_ATP-bd_CS"/>
</dbReference>
<dbReference type="InterPro" id="IPR000870">
    <property type="entry name" value="Homoserine_kinase"/>
</dbReference>
<dbReference type="InterPro" id="IPR020568">
    <property type="entry name" value="Ribosomal_Su5_D2-typ_SF"/>
</dbReference>
<dbReference type="InterPro" id="IPR014721">
    <property type="entry name" value="Ribsml_uS5_D2-typ_fold_subgr"/>
</dbReference>
<dbReference type="NCBIfam" id="NF002288">
    <property type="entry name" value="PRK01212.1-4"/>
    <property type="match status" value="1"/>
</dbReference>
<dbReference type="NCBIfam" id="TIGR00191">
    <property type="entry name" value="thrB"/>
    <property type="match status" value="1"/>
</dbReference>
<dbReference type="PANTHER" id="PTHR20861:SF1">
    <property type="entry name" value="HOMOSERINE KINASE"/>
    <property type="match status" value="1"/>
</dbReference>
<dbReference type="PANTHER" id="PTHR20861">
    <property type="entry name" value="HOMOSERINE/4-DIPHOSPHOCYTIDYL-2-C-METHYL-D-ERYTHRITOL KINASE"/>
    <property type="match status" value="1"/>
</dbReference>
<dbReference type="Pfam" id="PF08544">
    <property type="entry name" value="GHMP_kinases_C"/>
    <property type="match status" value="1"/>
</dbReference>
<dbReference type="Pfam" id="PF00288">
    <property type="entry name" value="GHMP_kinases_N"/>
    <property type="match status" value="1"/>
</dbReference>
<dbReference type="PIRSF" id="PIRSF000676">
    <property type="entry name" value="Homoser_kin"/>
    <property type="match status" value="1"/>
</dbReference>
<dbReference type="PRINTS" id="PR00958">
    <property type="entry name" value="HOMSERKINASE"/>
</dbReference>
<dbReference type="SUPFAM" id="SSF55060">
    <property type="entry name" value="GHMP Kinase, C-terminal domain"/>
    <property type="match status" value="1"/>
</dbReference>
<dbReference type="SUPFAM" id="SSF54211">
    <property type="entry name" value="Ribosomal protein S5 domain 2-like"/>
    <property type="match status" value="1"/>
</dbReference>
<dbReference type="PROSITE" id="PS00627">
    <property type="entry name" value="GHMP_KINASES_ATP"/>
    <property type="match status" value="1"/>
</dbReference>